<proteinExistence type="inferred from homology"/>
<evidence type="ECO:0000255" key="1">
    <source>
        <dbReference type="HAMAP-Rule" id="MF_00169"/>
    </source>
</evidence>
<evidence type="ECO:0000305" key="2"/>
<dbReference type="EC" id="4.2.1.10" evidence="1"/>
<dbReference type="EMBL" id="AE003849">
    <property type="protein sequence ID" value="AAF82860.1"/>
    <property type="status" value="ALT_INIT"/>
    <property type="molecule type" value="Genomic_DNA"/>
</dbReference>
<dbReference type="PIR" id="C82853">
    <property type="entry name" value="C82853"/>
</dbReference>
<dbReference type="RefSeq" id="WP_010892596.1">
    <property type="nucleotide sequence ID" value="NC_002488.3"/>
</dbReference>
<dbReference type="SMR" id="Q9PH97"/>
<dbReference type="STRING" id="160492.XF_0047"/>
<dbReference type="KEGG" id="xfa:XF_0047"/>
<dbReference type="eggNOG" id="COG0757">
    <property type="taxonomic scope" value="Bacteria"/>
</dbReference>
<dbReference type="HOGENOM" id="CLU_090968_1_0_6"/>
<dbReference type="BRENDA" id="4.2.1.10">
    <property type="organism ID" value="6734"/>
</dbReference>
<dbReference type="UniPathway" id="UPA00053">
    <property type="reaction ID" value="UER00086"/>
</dbReference>
<dbReference type="Proteomes" id="UP000000812">
    <property type="component" value="Chromosome"/>
</dbReference>
<dbReference type="GO" id="GO:0003855">
    <property type="term" value="F:3-dehydroquinate dehydratase activity"/>
    <property type="evidence" value="ECO:0007669"/>
    <property type="project" value="UniProtKB-UniRule"/>
</dbReference>
<dbReference type="GO" id="GO:0008652">
    <property type="term" value="P:amino acid biosynthetic process"/>
    <property type="evidence" value="ECO:0007669"/>
    <property type="project" value="UniProtKB-KW"/>
</dbReference>
<dbReference type="GO" id="GO:0009073">
    <property type="term" value="P:aromatic amino acid family biosynthetic process"/>
    <property type="evidence" value="ECO:0007669"/>
    <property type="project" value="UniProtKB-KW"/>
</dbReference>
<dbReference type="GO" id="GO:0009423">
    <property type="term" value="P:chorismate biosynthetic process"/>
    <property type="evidence" value="ECO:0007669"/>
    <property type="project" value="UniProtKB-UniRule"/>
</dbReference>
<dbReference type="GO" id="GO:0019631">
    <property type="term" value="P:quinate catabolic process"/>
    <property type="evidence" value="ECO:0007669"/>
    <property type="project" value="TreeGrafter"/>
</dbReference>
<dbReference type="CDD" id="cd00466">
    <property type="entry name" value="DHQase_II"/>
    <property type="match status" value="1"/>
</dbReference>
<dbReference type="Gene3D" id="3.40.50.9100">
    <property type="entry name" value="Dehydroquinase, class II"/>
    <property type="match status" value="1"/>
</dbReference>
<dbReference type="HAMAP" id="MF_00169">
    <property type="entry name" value="AroQ"/>
    <property type="match status" value="1"/>
</dbReference>
<dbReference type="InterPro" id="IPR001874">
    <property type="entry name" value="DHquinase_II"/>
</dbReference>
<dbReference type="InterPro" id="IPR018509">
    <property type="entry name" value="DHquinase_II_CS"/>
</dbReference>
<dbReference type="InterPro" id="IPR036441">
    <property type="entry name" value="DHquinase_II_sf"/>
</dbReference>
<dbReference type="NCBIfam" id="TIGR01088">
    <property type="entry name" value="aroQ"/>
    <property type="match status" value="1"/>
</dbReference>
<dbReference type="NCBIfam" id="NF003804">
    <property type="entry name" value="PRK05395.1-1"/>
    <property type="match status" value="1"/>
</dbReference>
<dbReference type="NCBIfam" id="NF003805">
    <property type="entry name" value="PRK05395.1-2"/>
    <property type="match status" value="1"/>
</dbReference>
<dbReference type="NCBIfam" id="NF003806">
    <property type="entry name" value="PRK05395.1-3"/>
    <property type="match status" value="1"/>
</dbReference>
<dbReference type="NCBIfam" id="NF003807">
    <property type="entry name" value="PRK05395.1-4"/>
    <property type="match status" value="1"/>
</dbReference>
<dbReference type="PANTHER" id="PTHR21272">
    <property type="entry name" value="CATABOLIC 3-DEHYDROQUINASE"/>
    <property type="match status" value="1"/>
</dbReference>
<dbReference type="PANTHER" id="PTHR21272:SF3">
    <property type="entry name" value="CATABOLIC 3-DEHYDROQUINASE"/>
    <property type="match status" value="1"/>
</dbReference>
<dbReference type="Pfam" id="PF01220">
    <property type="entry name" value="DHquinase_II"/>
    <property type="match status" value="1"/>
</dbReference>
<dbReference type="PIRSF" id="PIRSF001399">
    <property type="entry name" value="DHquinase_II"/>
    <property type="match status" value="1"/>
</dbReference>
<dbReference type="SUPFAM" id="SSF52304">
    <property type="entry name" value="Type II 3-dehydroquinate dehydratase"/>
    <property type="match status" value="1"/>
</dbReference>
<dbReference type="PROSITE" id="PS01029">
    <property type="entry name" value="DEHYDROQUINASE_II"/>
    <property type="match status" value="1"/>
</dbReference>
<reference key="1">
    <citation type="journal article" date="2000" name="Nature">
        <title>The genome sequence of the plant pathogen Xylella fastidiosa.</title>
        <authorList>
            <person name="Simpson A.J.G."/>
            <person name="Reinach F.C."/>
            <person name="Arruda P."/>
            <person name="Abreu F.A."/>
            <person name="Acencio M."/>
            <person name="Alvarenga R."/>
            <person name="Alves L.M.C."/>
            <person name="Araya J.E."/>
            <person name="Baia G.S."/>
            <person name="Baptista C.S."/>
            <person name="Barros M.H."/>
            <person name="Bonaccorsi E.D."/>
            <person name="Bordin S."/>
            <person name="Bove J.M."/>
            <person name="Briones M.R.S."/>
            <person name="Bueno M.R.P."/>
            <person name="Camargo A.A."/>
            <person name="Camargo L.E.A."/>
            <person name="Carraro D.M."/>
            <person name="Carrer H."/>
            <person name="Colauto N.B."/>
            <person name="Colombo C."/>
            <person name="Costa F.F."/>
            <person name="Costa M.C.R."/>
            <person name="Costa-Neto C.M."/>
            <person name="Coutinho L.L."/>
            <person name="Cristofani M."/>
            <person name="Dias-Neto E."/>
            <person name="Docena C."/>
            <person name="El-Dorry H."/>
            <person name="Facincani A.P."/>
            <person name="Ferreira A.J.S."/>
            <person name="Ferreira V.C.A."/>
            <person name="Ferro J.A."/>
            <person name="Fraga J.S."/>
            <person name="Franca S.C."/>
            <person name="Franco M.C."/>
            <person name="Frohme M."/>
            <person name="Furlan L.R."/>
            <person name="Garnier M."/>
            <person name="Goldman G.H."/>
            <person name="Goldman M.H.S."/>
            <person name="Gomes S.L."/>
            <person name="Gruber A."/>
            <person name="Ho P.L."/>
            <person name="Hoheisel J.D."/>
            <person name="Junqueira M.L."/>
            <person name="Kemper E.L."/>
            <person name="Kitajima J.P."/>
            <person name="Krieger J.E."/>
            <person name="Kuramae E.E."/>
            <person name="Laigret F."/>
            <person name="Lambais M.R."/>
            <person name="Leite L.C.C."/>
            <person name="Lemos E.G.M."/>
            <person name="Lemos M.V.F."/>
            <person name="Lopes S.A."/>
            <person name="Lopes C.R."/>
            <person name="Machado J.A."/>
            <person name="Machado M.A."/>
            <person name="Madeira A.M.B.N."/>
            <person name="Madeira H.M.F."/>
            <person name="Marino C.L."/>
            <person name="Marques M.V."/>
            <person name="Martins E.A.L."/>
            <person name="Martins E.M.F."/>
            <person name="Matsukuma A.Y."/>
            <person name="Menck C.F.M."/>
            <person name="Miracca E.C."/>
            <person name="Miyaki C.Y."/>
            <person name="Monteiro-Vitorello C.B."/>
            <person name="Moon D.H."/>
            <person name="Nagai M.A."/>
            <person name="Nascimento A.L.T.O."/>
            <person name="Netto L.E.S."/>
            <person name="Nhani A. Jr."/>
            <person name="Nobrega F.G."/>
            <person name="Nunes L.R."/>
            <person name="Oliveira M.A."/>
            <person name="de Oliveira M.C."/>
            <person name="de Oliveira R.C."/>
            <person name="Palmieri D.A."/>
            <person name="Paris A."/>
            <person name="Peixoto B.R."/>
            <person name="Pereira G.A.G."/>
            <person name="Pereira H.A. Jr."/>
            <person name="Pesquero J.B."/>
            <person name="Quaggio R.B."/>
            <person name="Roberto P.G."/>
            <person name="Rodrigues V."/>
            <person name="de Rosa A.J.M."/>
            <person name="de Rosa V.E. Jr."/>
            <person name="de Sa R.G."/>
            <person name="Santelli R.V."/>
            <person name="Sawasaki H.E."/>
            <person name="da Silva A.C.R."/>
            <person name="da Silva A.M."/>
            <person name="da Silva F.R."/>
            <person name="Silva W.A. Jr."/>
            <person name="da Silveira J.F."/>
            <person name="Silvestri M.L.Z."/>
            <person name="Siqueira W.J."/>
            <person name="de Souza A.A."/>
            <person name="de Souza A.P."/>
            <person name="Terenzi M.F."/>
            <person name="Truffi D."/>
            <person name="Tsai S.M."/>
            <person name="Tsuhako M.H."/>
            <person name="Vallada H."/>
            <person name="Van Sluys M.A."/>
            <person name="Verjovski-Almeida S."/>
            <person name="Vettore A.L."/>
            <person name="Zago M.A."/>
            <person name="Zatz M."/>
            <person name="Meidanis J."/>
            <person name="Setubal J.C."/>
        </authorList>
    </citation>
    <scope>NUCLEOTIDE SEQUENCE [LARGE SCALE GENOMIC DNA]</scope>
    <source>
        <strain>9a5c</strain>
    </source>
</reference>
<sequence>MAHLLLLHGPNLNLLGTREPEIYGRITLPQIDAALAERATAAGHGLSSLQSNAEHVLIERIHATPEDGTAFILINPGAFTHTSVALRDALLAVALPFVEIHLSNPYTREPFRHHSYLADKALGVVCGFGVDSYRIALEGVIARLGSDV</sequence>
<accession>Q9PH97</accession>
<organism>
    <name type="scientific">Xylella fastidiosa (strain 9a5c)</name>
    <dbReference type="NCBI Taxonomy" id="160492"/>
    <lineage>
        <taxon>Bacteria</taxon>
        <taxon>Pseudomonadati</taxon>
        <taxon>Pseudomonadota</taxon>
        <taxon>Gammaproteobacteria</taxon>
        <taxon>Lysobacterales</taxon>
        <taxon>Lysobacteraceae</taxon>
        <taxon>Xylella</taxon>
    </lineage>
</organism>
<gene>
    <name evidence="1" type="primary">aroQ</name>
    <name type="ordered locus">XF_0047</name>
</gene>
<name>AROQ_XYLFA</name>
<comment type="function">
    <text evidence="1">Catalyzes a trans-dehydration via an enolate intermediate.</text>
</comment>
<comment type="catalytic activity">
    <reaction evidence="1">
        <text>3-dehydroquinate = 3-dehydroshikimate + H2O</text>
        <dbReference type="Rhea" id="RHEA:21096"/>
        <dbReference type="ChEBI" id="CHEBI:15377"/>
        <dbReference type="ChEBI" id="CHEBI:16630"/>
        <dbReference type="ChEBI" id="CHEBI:32364"/>
        <dbReference type="EC" id="4.2.1.10"/>
    </reaction>
</comment>
<comment type="pathway">
    <text evidence="1">Metabolic intermediate biosynthesis; chorismate biosynthesis; chorismate from D-erythrose 4-phosphate and phosphoenolpyruvate: step 3/7.</text>
</comment>
<comment type="subunit">
    <text evidence="1">Homododecamer.</text>
</comment>
<comment type="similarity">
    <text evidence="1">Belongs to the type-II 3-dehydroquinase family.</text>
</comment>
<comment type="sequence caution" evidence="2">
    <conflict type="erroneous initiation">
        <sequence resource="EMBL-CDS" id="AAF82860"/>
    </conflict>
</comment>
<keyword id="KW-0028">Amino-acid biosynthesis</keyword>
<keyword id="KW-0057">Aromatic amino acid biosynthesis</keyword>
<keyword id="KW-0456">Lyase</keyword>
<feature type="chain" id="PRO_0000159944" description="3-dehydroquinate dehydratase">
    <location>
        <begin position="1"/>
        <end position="148"/>
    </location>
</feature>
<feature type="active site" description="Proton acceptor" evidence="1">
    <location>
        <position position="23"/>
    </location>
</feature>
<feature type="active site" description="Proton donor" evidence="1">
    <location>
        <position position="101"/>
    </location>
</feature>
<feature type="binding site" evidence="1">
    <location>
        <position position="75"/>
    </location>
    <ligand>
        <name>substrate</name>
    </ligand>
</feature>
<feature type="binding site" evidence="1">
    <location>
        <position position="81"/>
    </location>
    <ligand>
        <name>substrate</name>
    </ligand>
</feature>
<feature type="binding site" evidence="1">
    <location>
        <position position="88"/>
    </location>
    <ligand>
        <name>substrate</name>
    </ligand>
</feature>
<feature type="binding site" evidence="1">
    <location>
        <begin position="102"/>
        <end position="103"/>
    </location>
    <ligand>
        <name>substrate</name>
    </ligand>
</feature>
<feature type="binding site" evidence="1">
    <location>
        <position position="112"/>
    </location>
    <ligand>
        <name>substrate</name>
    </ligand>
</feature>
<feature type="site" description="Transition state stabilizer" evidence="1">
    <location>
        <position position="18"/>
    </location>
</feature>
<protein>
    <recommendedName>
        <fullName evidence="1">3-dehydroquinate dehydratase</fullName>
        <shortName evidence="1">3-dehydroquinase</shortName>
        <ecNumber evidence="1">4.2.1.10</ecNumber>
    </recommendedName>
    <alternativeName>
        <fullName evidence="1">Type II DHQase</fullName>
    </alternativeName>
</protein>